<protein>
    <recommendedName>
        <fullName>Peptidoglycan-recognition protein LE</fullName>
    </recommendedName>
</protein>
<name>PGPLE_DROME</name>
<evidence type="ECO:0000255" key="1"/>
<evidence type="ECO:0000256" key="2">
    <source>
        <dbReference type="SAM" id="MobiDB-lite"/>
    </source>
</evidence>
<evidence type="ECO:0000269" key="3">
    <source>
    </source>
</evidence>
<evidence type="ECO:0000269" key="4">
    <source>
    </source>
</evidence>
<evidence type="ECO:0000269" key="5">
    <source>
    </source>
</evidence>
<evidence type="ECO:0000269" key="6">
    <source>
    </source>
</evidence>
<evidence type="ECO:0000269" key="7">
    <source>
    </source>
</evidence>
<evidence type="ECO:0000305" key="8"/>
<evidence type="ECO:0007829" key="9">
    <source>
        <dbReference type="PDB" id="2CB3"/>
    </source>
</evidence>
<accession>Q9VXN9</accession>
<organism>
    <name type="scientific">Drosophila melanogaster</name>
    <name type="common">Fruit fly</name>
    <dbReference type="NCBI Taxonomy" id="7227"/>
    <lineage>
        <taxon>Eukaryota</taxon>
        <taxon>Metazoa</taxon>
        <taxon>Ecdysozoa</taxon>
        <taxon>Arthropoda</taxon>
        <taxon>Hexapoda</taxon>
        <taxon>Insecta</taxon>
        <taxon>Pterygota</taxon>
        <taxon>Neoptera</taxon>
        <taxon>Endopterygota</taxon>
        <taxon>Diptera</taxon>
        <taxon>Brachycera</taxon>
        <taxon>Muscomorpha</taxon>
        <taxon>Ephydroidea</taxon>
        <taxon>Drosophilidae</taxon>
        <taxon>Drosophila</taxon>
        <taxon>Sophophora</taxon>
    </lineage>
</organism>
<keyword id="KW-0002">3D-structure</keyword>
<keyword id="KW-0325">Glycoprotein</keyword>
<keyword id="KW-0391">Immunity</keyword>
<keyword id="KW-0399">Innate immunity</keyword>
<keyword id="KW-1185">Reference proteome</keyword>
<keyword id="KW-0964">Secreted</keyword>
<proteinExistence type="evidence at protein level"/>
<reference key="1">
    <citation type="journal article" date="2000" name="Proc. Natl. Acad. Sci. U.S.A.">
        <title>A family of peptidoglycan recognition proteins in the fruit fly Drosophila melanogaster.</title>
        <authorList>
            <person name="Werner T."/>
            <person name="Liu G."/>
            <person name="Kang D."/>
            <person name="Ekengren S."/>
            <person name="Steiner H."/>
            <person name="Hultmark D."/>
        </authorList>
    </citation>
    <scope>NUCLEOTIDE SEQUENCE [MRNA]</scope>
    <scope>DEVELOPMENTAL STAGE</scope>
</reference>
<reference key="2">
    <citation type="journal article" date="2000" name="Science">
        <title>The genome sequence of Drosophila melanogaster.</title>
        <authorList>
            <person name="Adams M.D."/>
            <person name="Celniker S.E."/>
            <person name="Holt R.A."/>
            <person name="Evans C.A."/>
            <person name="Gocayne J.D."/>
            <person name="Amanatides P.G."/>
            <person name="Scherer S.E."/>
            <person name="Li P.W."/>
            <person name="Hoskins R.A."/>
            <person name="Galle R.F."/>
            <person name="George R.A."/>
            <person name="Lewis S.E."/>
            <person name="Richards S."/>
            <person name="Ashburner M."/>
            <person name="Henderson S.N."/>
            <person name="Sutton G.G."/>
            <person name="Wortman J.R."/>
            <person name="Yandell M.D."/>
            <person name="Zhang Q."/>
            <person name="Chen L.X."/>
            <person name="Brandon R.C."/>
            <person name="Rogers Y.-H.C."/>
            <person name="Blazej R.G."/>
            <person name="Champe M."/>
            <person name="Pfeiffer B.D."/>
            <person name="Wan K.H."/>
            <person name="Doyle C."/>
            <person name="Baxter E.G."/>
            <person name="Helt G."/>
            <person name="Nelson C.R."/>
            <person name="Miklos G.L.G."/>
            <person name="Abril J.F."/>
            <person name="Agbayani A."/>
            <person name="An H.-J."/>
            <person name="Andrews-Pfannkoch C."/>
            <person name="Baldwin D."/>
            <person name="Ballew R.M."/>
            <person name="Basu A."/>
            <person name="Baxendale J."/>
            <person name="Bayraktaroglu L."/>
            <person name="Beasley E.M."/>
            <person name="Beeson K.Y."/>
            <person name="Benos P.V."/>
            <person name="Berman B.P."/>
            <person name="Bhandari D."/>
            <person name="Bolshakov S."/>
            <person name="Borkova D."/>
            <person name="Botchan M.R."/>
            <person name="Bouck J."/>
            <person name="Brokstein P."/>
            <person name="Brottier P."/>
            <person name="Burtis K.C."/>
            <person name="Busam D.A."/>
            <person name="Butler H."/>
            <person name="Cadieu E."/>
            <person name="Center A."/>
            <person name="Chandra I."/>
            <person name="Cherry J.M."/>
            <person name="Cawley S."/>
            <person name="Dahlke C."/>
            <person name="Davenport L.B."/>
            <person name="Davies P."/>
            <person name="de Pablos B."/>
            <person name="Delcher A."/>
            <person name="Deng Z."/>
            <person name="Mays A.D."/>
            <person name="Dew I."/>
            <person name="Dietz S.M."/>
            <person name="Dodson K."/>
            <person name="Doup L.E."/>
            <person name="Downes M."/>
            <person name="Dugan-Rocha S."/>
            <person name="Dunkov B.C."/>
            <person name="Dunn P."/>
            <person name="Durbin K.J."/>
            <person name="Evangelista C.C."/>
            <person name="Ferraz C."/>
            <person name="Ferriera S."/>
            <person name="Fleischmann W."/>
            <person name="Fosler C."/>
            <person name="Gabrielian A.E."/>
            <person name="Garg N.S."/>
            <person name="Gelbart W.M."/>
            <person name="Glasser K."/>
            <person name="Glodek A."/>
            <person name="Gong F."/>
            <person name="Gorrell J.H."/>
            <person name="Gu Z."/>
            <person name="Guan P."/>
            <person name="Harris M."/>
            <person name="Harris N.L."/>
            <person name="Harvey D.A."/>
            <person name="Heiman T.J."/>
            <person name="Hernandez J.R."/>
            <person name="Houck J."/>
            <person name="Hostin D."/>
            <person name="Houston K.A."/>
            <person name="Howland T.J."/>
            <person name="Wei M.-H."/>
            <person name="Ibegwam C."/>
            <person name="Jalali M."/>
            <person name="Kalush F."/>
            <person name="Karpen G.H."/>
            <person name="Ke Z."/>
            <person name="Kennison J.A."/>
            <person name="Ketchum K.A."/>
            <person name="Kimmel B.E."/>
            <person name="Kodira C.D."/>
            <person name="Kraft C.L."/>
            <person name="Kravitz S."/>
            <person name="Kulp D."/>
            <person name="Lai Z."/>
            <person name="Lasko P."/>
            <person name="Lei Y."/>
            <person name="Levitsky A.A."/>
            <person name="Li J.H."/>
            <person name="Li Z."/>
            <person name="Liang Y."/>
            <person name="Lin X."/>
            <person name="Liu X."/>
            <person name="Mattei B."/>
            <person name="McIntosh T.C."/>
            <person name="McLeod M.P."/>
            <person name="McPherson D."/>
            <person name="Merkulov G."/>
            <person name="Milshina N.V."/>
            <person name="Mobarry C."/>
            <person name="Morris J."/>
            <person name="Moshrefi A."/>
            <person name="Mount S.M."/>
            <person name="Moy M."/>
            <person name="Murphy B."/>
            <person name="Murphy L."/>
            <person name="Muzny D.M."/>
            <person name="Nelson D.L."/>
            <person name="Nelson D.R."/>
            <person name="Nelson K.A."/>
            <person name="Nixon K."/>
            <person name="Nusskern D.R."/>
            <person name="Pacleb J.M."/>
            <person name="Palazzolo M."/>
            <person name="Pittman G.S."/>
            <person name="Pan S."/>
            <person name="Pollard J."/>
            <person name="Puri V."/>
            <person name="Reese M.G."/>
            <person name="Reinert K."/>
            <person name="Remington K."/>
            <person name="Saunders R.D.C."/>
            <person name="Scheeler F."/>
            <person name="Shen H."/>
            <person name="Shue B.C."/>
            <person name="Siden-Kiamos I."/>
            <person name="Simpson M."/>
            <person name="Skupski M.P."/>
            <person name="Smith T.J."/>
            <person name="Spier E."/>
            <person name="Spradling A.C."/>
            <person name="Stapleton M."/>
            <person name="Strong R."/>
            <person name="Sun E."/>
            <person name="Svirskas R."/>
            <person name="Tector C."/>
            <person name="Turner R."/>
            <person name="Venter E."/>
            <person name="Wang A.H."/>
            <person name="Wang X."/>
            <person name="Wang Z.-Y."/>
            <person name="Wassarman D.A."/>
            <person name="Weinstock G.M."/>
            <person name="Weissenbach J."/>
            <person name="Williams S.M."/>
            <person name="Woodage T."/>
            <person name="Worley K.C."/>
            <person name="Wu D."/>
            <person name="Yang S."/>
            <person name="Yao Q.A."/>
            <person name="Ye J."/>
            <person name="Yeh R.-F."/>
            <person name="Zaveri J.S."/>
            <person name="Zhan M."/>
            <person name="Zhang G."/>
            <person name="Zhao Q."/>
            <person name="Zheng L."/>
            <person name="Zheng X.H."/>
            <person name="Zhong F.N."/>
            <person name="Zhong W."/>
            <person name="Zhou X."/>
            <person name="Zhu S.C."/>
            <person name="Zhu X."/>
            <person name="Smith H.O."/>
            <person name="Gibbs R.A."/>
            <person name="Myers E.W."/>
            <person name="Rubin G.M."/>
            <person name="Venter J.C."/>
        </authorList>
    </citation>
    <scope>NUCLEOTIDE SEQUENCE [LARGE SCALE GENOMIC DNA]</scope>
    <source>
        <strain>Berkeley</strain>
    </source>
</reference>
<reference key="3">
    <citation type="journal article" date="2002" name="Genome Biol.">
        <title>Annotation of the Drosophila melanogaster euchromatic genome: a systematic review.</title>
        <authorList>
            <person name="Misra S."/>
            <person name="Crosby M.A."/>
            <person name="Mungall C.J."/>
            <person name="Matthews B.B."/>
            <person name="Campbell K.S."/>
            <person name="Hradecky P."/>
            <person name="Huang Y."/>
            <person name="Kaminker J.S."/>
            <person name="Millburn G.H."/>
            <person name="Prochnik S.E."/>
            <person name="Smith C.D."/>
            <person name="Tupy J.L."/>
            <person name="Whitfield E.J."/>
            <person name="Bayraktaroglu L."/>
            <person name="Berman B.P."/>
            <person name="Bettencourt B.R."/>
            <person name="Celniker S.E."/>
            <person name="de Grey A.D.N.J."/>
            <person name="Drysdale R.A."/>
            <person name="Harris N.L."/>
            <person name="Richter J."/>
            <person name="Russo S."/>
            <person name="Schroeder A.J."/>
            <person name="Shu S.Q."/>
            <person name="Stapleton M."/>
            <person name="Yamada C."/>
            <person name="Ashburner M."/>
            <person name="Gelbart W.M."/>
            <person name="Rubin G.M."/>
            <person name="Lewis S.E."/>
        </authorList>
    </citation>
    <scope>GENOME REANNOTATION</scope>
    <source>
        <strain>Berkeley</strain>
    </source>
</reference>
<reference key="4">
    <citation type="journal article" date="2002" name="Genome Biol.">
        <title>A Drosophila full-length cDNA resource.</title>
        <authorList>
            <person name="Stapleton M."/>
            <person name="Carlson J.W."/>
            <person name="Brokstein P."/>
            <person name="Yu C."/>
            <person name="Champe M."/>
            <person name="George R.A."/>
            <person name="Guarin H."/>
            <person name="Kronmiller B."/>
            <person name="Pacleb J.M."/>
            <person name="Park S."/>
            <person name="Wan K.H."/>
            <person name="Rubin G.M."/>
            <person name="Celniker S.E."/>
        </authorList>
    </citation>
    <scope>NUCLEOTIDE SEQUENCE [LARGE SCALE MRNA]</scope>
    <source>
        <strain>Berkeley</strain>
        <tissue>Head</tissue>
    </source>
</reference>
<reference key="5">
    <citation type="journal article" date="2002" name="Proc. Natl. Acad. Sci. U.S.A.">
        <title>Overexpression of a pattern-recognition receptor, peptidoglycan-recognition protein-LE, activates imd/relish-mediated antibacterial defense and the prophenoloxidase cascade in Drosophila larvae.</title>
        <authorList>
            <person name="Takehana A."/>
            <person name="Katsuyama T."/>
            <person name="Yano T."/>
            <person name="Oshima Y."/>
            <person name="Takada H."/>
            <person name="Aigaki T."/>
            <person name="Kurata S."/>
        </authorList>
    </citation>
    <scope>FUNCTION</scope>
</reference>
<reference key="6">
    <citation type="journal article" date="2004" name="EMBO J.">
        <title>Peptidoglycan recognition protein (PGRP)-LE and PGRP-LC act synergistically in Drosophila immunity.</title>
        <authorList>
            <person name="Takehana A."/>
            <person name="Yano T."/>
            <person name="Mita S."/>
            <person name="Kotani A."/>
            <person name="Oshima Y."/>
            <person name="Kurata S."/>
        </authorList>
    </citation>
    <scope>FUNCTION</scope>
    <scope>SUBCELLULAR LOCATION</scope>
    <scope>TISSUE SPECIFICITY</scope>
</reference>
<reference key="7">
    <citation type="journal article" date="2017" name="J. Immunol.">
        <title>SLC46 Family Transporters Facilitate Cytosolic Innate Immune Recognition of Monomeric Peptidoglycans.</title>
        <authorList>
            <person name="Paik D."/>
            <person name="Monahan A."/>
            <person name="Caffrey D.R."/>
            <person name="Elling R."/>
            <person name="Goldman W.E."/>
            <person name="Silverman N."/>
        </authorList>
    </citation>
    <scope>FUNCTION</scope>
    <scope>MUTAGENESIS OF GLU-231; SER-232 AND ARG-254</scope>
</reference>
<reference key="8">
    <citation type="journal article" date="2006" name="J. Biol. Chem.">
        <title>Structural basis for preferential recognition of diaminopimelic acid-type peptidoglycan by a subset of peptidoglycan recognition proteins.</title>
        <authorList>
            <person name="Lim J.-H."/>
            <person name="Kim M.-S."/>
            <person name="Kim H.-E."/>
            <person name="Yano T."/>
            <person name="Oshima Y."/>
            <person name="Aggarwal K."/>
            <person name="Goldman W.E."/>
            <person name="Silverman N."/>
            <person name="Kurata S."/>
            <person name="Oh B.-H."/>
        </authorList>
    </citation>
    <scope>X-RAY CRYSTALLOGRAPHY (2.4 ANGSTROMS) OF 173-345 IN COMPLEX WITH PEPTIDOGLYCAN FRAGMENT</scope>
    <scope>SUBUNIT</scope>
    <scope>MUTAGENESIS OF GLU-231; SER-232 AND ARG-254</scope>
</reference>
<gene>
    <name type="primary">PGRP-LE</name>
    <name type="ORF">CG8995</name>
</gene>
<comment type="function">
    <text evidence="4 5 7">Peptidoglycan-recognition protein that plays a key role in innate immunity by binding to murein peptidoglycans (PGN) of Gram-negative bacteria and activating the imd/Relish pathway. Has no activity against on Gram-positive bacteria. Binds to diaminopimelic acid-type PGN (DAP-type PGN), an activator of the imd/Relish pathway. Functions synergistically with PGRP-LC in producing resistance to E.coli and B.megaterium infections, which have the DAP-type peptidoglycan. Acts both upstream and in parallel with PGRP-LC in the imd/Relish pathway, and is required for infection-dependent activation of melanization. Required for Relish processing and nuclear translocation following proteolytic cleavage. Its localization suggests a role in the recognition and subsequent activation of the signaling at the first point of contact with invading bacteria.</text>
</comment>
<comment type="subunit">
    <text evidence="6">Monomer. Peptidoglycan binding induces oligomerization.</text>
</comment>
<comment type="subcellular location">
    <subcellularLocation>
        <location evidence="5">Secreted</location>
    </subcellularLocation>
    <text>However, no signal sequence are predicted by sequence analysis tools.</text>
</comment>
<comment type="tissue specificity">
    <text evidence="5">Expressed in hemolymph. Localizes at the lumenal surface of the trachea (at protein level).</text>
</comment>
<comment type="developmental stage">
    <text evidence="3">Highly expressed in 0-5 hours embryos and in adult females, suggesting that it is expressed maternally.</text>
</comment>
<comment type="similarity">
    <text evidence="8">Belongs to the N-acetylmuramoyl-L-alanine amidase 2 family.</text>
</comment>
<dbReference type="EMBL" id="AF313391">
    <property type="protein sequence ID" value="AAG32064.1"/>
    <property type="molecule type" value="mRNA"/>
</dbReference>
<dbReference type="EMBL" id="AE014298">
    <property type="protein sequence ID" value="AAF48519.1"/>
    <property type="molecule type" value="Genomic_DNA"/>
</dbReference>
<dbReference type="EMBL" id="AY058258">
    <property type="protein sequence ID" value="AAL13487.1"/>
    <property type="molecule type" value="mRNA"/>
</dbReference>
<dbReference type="RefSeq" id="NP_001245695.1">
    <property type="nucleotide sequence ID" value="NM_001258766.3"/>
</dbReference>
<dbReference type="RefSeq" id="NP_573078.1">
    <property type="nucleotide sequence ID" value="NM_132850.4"/>
</dbReference>
<dbReference type="PDB" id="2CB3">
    <property type="method" value="X-ray"/>
    <property type="resolution" value="2.40 A"/>
    <property type="chains" value="A/B/C/D=173-345"/>
</dbReference>
<dbReference type="PDBsum" id="2CB3"/>
<dbReference type="SMR" id="Q9VXN9"/>
<dbReference type="BioGRID" id="58882">
    <property type="interactions" value="149"/>
</dbReference>
<dbReference type="FunCoup" id="Q9VXN9">
    <property type="interactions" value="95"/>
</dbReference>
<dbReference type="IntAct" id="Q9VXN9">
    <property type="interactions" value="4"/>
</dbReference>
<dbReference type="STRING" id="7227.FBpp0300347"/>
<dbReference type="GlyCosmos" id="Q9VXN9">
    <property type="glycosylation" value="5 sites, No reported glycans"/>
</dbReference>
<dbReference type="GlyGen" id="Q9VXN9">
    <property type="glycosylation" value="5 sites"/>
</dbReference>
<dbReference type="PaxDb" id="7227-FBpp0300347"/>
<dbReference type="DNASU" id="32534"/>
<dbReference type="EnsemblMetazoa" id="FBtr0074183">
    <property type="protein sequence ID" value="FBpp0073968"/>
    <property type="gene ID" value="FBgn0030695"/>
</dbReference>
<dbReference type="EnsemblMetazoa" id="FBtr0307978">
    <property type="protein sequence ID" value="FBpp0300347"/>
    <property type="gene ID" value="FBgn0030695"/>
</dbReference>
<dbReference type="GeneID" id="32534"/>
<dbReference type="KEGG" id="dme:Dmel_CG8995"/>
<dbReference type="AGR" id="FB:FBgn0030695"/>
<dbReference type="CTD" id="32534"/>
<dbReference type="FlyBase" id="FBgn0030695">
    <property type="gene designation" value="PGRP-LE"/>
</dbReference>
<dbReference type="VEuPathDB" id="VectorBase:FBgn0030695"/>
<dbReference type="eggNOG" id="ENOG502S2KY">
    <property type="taxonomic scope" value="Eukaryota"/>
</dbReference>
<dbReference type="GeneTree" id="ENSGT00940000166535"/>
<dbReference type="HOGENOM" id="CLU_804788_0_0_1"/>
<dbReference type="InParanoid" id="Q9VXN9"/>
<dbReference type="OMA" id="WLAQMPM"/>
<dbReference type="OrthoDB" id="10001926at2759"/>
<dbReference type="PhylomeDB" id="Q9VXN9"/>
<dbReference type="Reactome" id="R-DME-209171">
    <property type="pathway name" value="Peptidoglycans (PGN) bind to a peptidoglycan recognition protein receptor, PGRP-LC/LE"/>
</dbReference>
<dbReference type="Reactome" id="R-DME-209266">
    <property type="pathway name" value="Peptidoglycan bound PGRP-LC/LE oligomerises"/>
</dbReference>
<dbReference type="Reactome" id="R-DME-214397">
    <property type="pathway name" value="Assembly of the PGN:PGRP-LC/LE receptor 'signalling complex'"/>
</dbReference>
<dbReference type="Reactome" id="R-DME-214399">
    <property type="pathway name" value="Activated IkappaB kinase (IKK) complex, Phospho IRD5:KEY dimer, phosphorylates REL in the PGN:PGRP-LC/LE receptor 'signalling complex'"/>
</dbReference>
<dbReference type="Reactome" id="R-DME-214411">
    <property type="pathway name" value="REL binds to DREDD in the PGN:PGRP-LC/LE receptor 'signalling complex'"/>
</dbReference>
<dbReference type="Reactome" id="R-DME-214416">
    <property type="pathway name" value="Phosphorylated REL is cleaved by and dissociates from DREDD"/>
</dbReference>
<dbReference type="SignaLink" id="Q9VXN9"/>
<dbReference type="BioGRID-ORCS" id="32534">
    <property type="hits" value="0 hits in 3 CRISPR screens"/>
</dbReference>
<dbReference type="EvolutionaryTrace" id="Q9VXN9"/>
<dbReference type="GenomeRNAi" id="32534"/>
<dbReference type="PRO" id="PR:Q9VXN9"/>
<dbReference type="Proteomes" id="UP000000803">
    <property type="component" value="Chromosome X"/>
</dbReference>
<dbReference type="Bgee" id="FBgn0030695">
    <property type="expression patterns" value="Expressed in adult class III enteroendocrine cell in adult midgut (Drosophila) and 141 other cell types or tissues"/>
</dbReference>
<dbReference type="ExpressionAtlas" id="Q9VXN9">
    <property type="expression patterns" value="baseline and differential"/>
</dbReference>
<dbReference type="GO" id="GO:0005829">
    <property type="term" value="C:cytosol"/>
    <property type="evidence" value="ECO:0000314"/>
    <property type="project" value="FlyBase"/>
</dbReference>
<dbReference type="GO" id="GO:0005576">
    <property type="term" value="C:extracellular region"/>
    <property type="evidence" value="ECO:0000314"/>
    <property type="project" value="UniProtKB"/>
</dbReference>
<dbReference type="GO" id="GO:0042834">
    <property type="term" value="F:peptidoglycan binding"/>
    <property type="evidence" value="ECO:0000250"/>
    <property type="project" value="FlyBase"/>
</dbReference>
<dbReference type="GO" id="GO:0008270">
    <property type="term" value="F:zinc ion binding"/>
    <property type="evidence" value="ECO:0007669"/>
    <property type="project" value="InterPro"/>
</dbReference>
<dbReference type="GO" id="GO:0042742">
    <property type="term" value="P:defense response to bacterium"/>
    <property type="evidence" value="ECO:0000315"/>
    <property type="project" value="FlyBase"/>
</dbReference>
<dbReference type="GO" id="GO:0050829">
    <property type="term" value="P:defense response to Gram-negative bacterium"/>
    <property type="evidence" value="ECO:0000315"/>
    <property type="project" value="FlyBase"/>
</dbReference>
<dbReference type="GO" id="GO:0050830">
    <property type="term" value="P:defense response to Gram-positive bacterium"/>
    <property type="evidence" value="ECO:0000314"/>
    <property type="project" value="UniProtKB"/>
</dbReference>
<dbReference type="GO" id="GO:0051607">
    <property type="term" value="P:defense response to virus"/>
    <property type="evidence" value="ECO:0000315"/>
    <property type="project" value="FlyBase"/>
</dbReference>
<dbReference type="GO" id="GO:0008340">
    <property type="term" value="P:determination of adult lifespan"/>
    <property type="evidence" value="ECO:0000315"/>
    <property type="project" value="FlyBase"/>
</dbReference>
<dbReference type="GO" id="GO:0045087">
    <property type="term" value="P:innate immune response"/>
    <property type="evidence" value="ECO:0000303"/>
    <property type="project" value="UniProtKB"/>
</dbReference>
<dbReference type="GO" id="GO:0061057">
    <property type="term" value="P:peptidoglycan recognition protein signaling pathway"/>
    <property type="evidence" value="ECO:0000314"/>
    <property type="project" value="FlyBase"/>
</dbReference>
<dbReference type="GO" id="GO:0045089">
    <property type="term" value="P:positive regulation of innate immune response"/>
    <property type="evidence" value="ECO:0000315"/>
    <property type="project" value="FlyBase"/>
</dbReference>
<dbReference type="GO" id="GO:0050766">
    <property type="term" value="P:positive regulation of phagocytosis"/>
    <property type="evidence" value="ECO:0000316"/>
    <property type="project" value="FlyBase"/>
</dbReference>
<dbReference type="CDD" id="cd06583">
    <property type="entry name" value="PGRP"/>
    <property type="match status" value="1"/>
</dbReference>
<dbReference type="FunFam" id="3.40.80.10:FF:000001">
    <property type="entry name" value="Peptidoglycan recognition protein 1"/>
    <property type="match status" value="1"/>
</dbReference>
<dbReference type="Gene3D" id="3.40.80.10">
    <property type="entry name" value="Peptidoglycan recognition protein-like"/>
    <property type="match status" value="1"/>
</dbReference>
<dbReference type="InterPro" id="IPR036505">
    <property type="entry name" value="Amidase/PGRP_sf"/>
</dbReference>
<dbReference type="InterPro" id="IPR002502">
    <property type="entry name" value="Amidase_domain"/>
</dbReference>
<dbReference type="InterPro" id="IPR015510">
    <property type="entry name" value="PGRP"/>
</dbReference>
<dbReference type="InterPro" id="IPR006619">
    <property type="entry name" value="PGRP_domain_met/bac"/>
</dbReference>
<dbReference type="PANTHER" id="PTHR11022">
    <property type="entry name" value="PEPTIDOGLYCAN RECOGNITION PROTEIN"/>
    <property type="match status" value="1"/>
</dbReference>
<dbReference type="PANTHER" id="PTHR11022:SF41">
    <property type="entry name" value="PEPTIDOGLYCAN-RECOGNITION PROTEIN LC-RELATED"/>
    <property type="match status" value="1"/>
</dbReference>
<dbReference type="Pfam" id="PF01510">
    <property type="entry name" value="Amidase_2"/>
    <property type="match status" value="1"/>
</dbReference>
<dbReference type="SMART" id="SM00644">
    <property type="entry name" value="Ami_2"/>
    <property type="match status" value="1"/>
</dbReference>
<dbReference type="SMART" id="SM00701">
    <property type="entry name" value="PGRP"/>
    <property type="match status" value="1"/>
</dbReference>
<dbReference type="SUPFAM" id="SSF55846">
    <property type="entry name" value="N-acetylmuramoyl-L-alanine amidase-like"/>
    <property type="match status" value="1"/>
</dbReference>
<sequence length="345" mass="39426">MSESGIKKLSQERTREWLASQEDEELESIAESSVVDSLDYDYTEEEEDADQNTSEEISTMTLGTQIATKKHSIISDTIRDLMNSINSIQTLGNVNISNSTNVHIGNVTNINGNIQIIADGLTQNRRDRRHVSPPRDNAPKTPTHFEDDYQDESEERVRSDVFIRRQKFKIPKELSAIIPRSSWLAQKPMDEPLPLQLPVKYVVILHTATESSEKRAINVRLIRDMQCFHIESRGWNDIAYNFLVGCDGNIYEGRGWKTVGAHTLGYNRISLGISFIGCFMKELPTADALNMCRNLLARGVEDGHISTDYRLICHCQCNSTESPGRRLYEEIQTWPHFYNIEEEEQ</sequence>
<feature type="chain" id="PRO_0000220626" description="Peptidoglycan-recognition protein LE">
    <location>
        <begin position="1"/>
        <end position="345"/>
    </location>
</feature>
<feature type="domain" description="N-acetylmuramoyl-L-alanine amidase" evidence="1">
    <location>
        <begin position="198"/>
        <end position="324"/>
    </location>
</feature>
<feature type="region of interest" description="Disordered" evidence="2">
    <location>
        <begin position="1"/>
        <end position="38"/>
    </location>
</feature>
<feature type="region of interest" description="Disordered" evidence="2">
    <location>
        <begin position="124"/>
        <end position="152"/>
    </location>
</feature>
<feature type="compositionally biased region" description="Basic and acidic residues" evidence="2">
    <location>
        <begin position="1"/>
        <end position="16"/>
    </location>
</feature>
<feature type="binding site">
    <location>
        <position position="206"/>
    </location>
    <ligand>
        <name>peptidoglycan</name>
        <dbReference type="ChEBI" id="CHEBI:8005"/>
    </ligand>
</feature>
<feature type="binding site">
    <location>
        <begin position="229"/>
        <end position="240"/>
    </location>
    <ligand>
        <name>peptidoglycan</name>
        <dbReference type="ChEBI" id="CHEBI:8005"/>
    </ligand>
</feature>
<feature type="binding site">
    <location>
        <position position="254"/>
    </location>
    <ligand>
        <name>peptidoglycan</name>
        <dbReference type="ChEBI" id="CHEBI:8005"/>
    </ligand>
</feature>
<feature type="binding site">
    <location>
        <begin position="261"/>
        <end position="267"/>
    </location>
    <ligand>
        <name>peptidoglycan</name>
        <dbReference type="ChEBI" id="CHEBI:8005"/>
    </ligand>
</feature>
<feature type="binding site">
    <location>
        <begin position="314"/>
        <end position="322"/>
    </location>
    <ligand>
        <name>peptidoglycan</name>
        <dbReference type="ChEBI" id="CHEBI:8005"/>
    </ligand>
</feature>
<feature type="glycosylation site" description="N-linked (GlcNAc...) asparagine" evidence="1">
    <location>
        <position position="52"/>
    </location>
</feature>
<feature type="glycosylation site" description="N-linked (GlcNAc...) asparagine" evidence="1">
    <location>
        <position position="95"/>
    </location>
</feature>
<feature type="glycosylation site" description="N-linked (GlcNAc...) asparagine" evidence="1">
    <location>
        <position position="98"/>
    </location>
</feature>
<feature type="glycosylation site" description="N-linked (GlcNAc...) asparagine" evidence="1">
    <location>
        <position position="106"/>
    </location>
</feature>
<feature type="glycosylation site" description="N-linked (GlcNAc...) asparagine" evidence="1">
    <location>
        <position position="318"/>
    </location>
</feature>
<feature type="mutagenesis site" description="Loss of peptidoglycan-induced oligomerization. Loss of DAP-type peptidoglycan muropeptide recognition." evidence="6 7">
    <original>E</original>
    <variation>L</variation>
    <location>
        <position position="231"/>
    </location>
</feature>
<feature type="mutagenesis site" description="Loss of peptidoglycan-induced oligomerization. Strongly reduced affinity for peptidoglycan. Loss of DAP-type peptidoglycan muropeptide recognition." evidence="6 7">
    <original>S</original>
    <variation>E</variation>
    <location>
        <position position="232"/>
    </location>
</feature>
<feature type="mutagenesis site" description="Strongly reduced affinity for peptidoglycan. Loss of DAP-type peptidoglycan muropeptide recognition." evidence="6 7">
    <original>R</original>
    <variation>T</variation>
    <location>
        <position position="254"/>
    </location>
</feature>
<feature type="helix" evidence="9">
    <location>
        <begin position="180"/>
        <end position="183"/>
    </location>
</feature>
<feature type="strand" evidence="9">
    <location>
        <begin position="197"/>
        <end position="206"/>
    </location>
</feature>
<feature type="helix" evidence="9">
    <location>
        <begin position="215"/>
        <end position="231"/>
    </location>
</feature>
<feature type="strand" evidence="9">
    <location>
        <begin position="241"/>
        <end position="244"/>
    </location>
</feature>
<feature type="strand" evidence="9">
    <location>
        <begin position="250"/>
        <end position="254"/>
    </location>
</feature>
<feature type="strand" evidence="9">
    <location>
        <begin position="261"/>
        <end position="263"/>
    </location>
</feature>
<feature type="turn" evidence="9">
    <location>
        <begin position="264"/>
        <end position="266"/>
    </location>
</feature>
<feature type="helix" evidence="9">
    <location>
        <begin position="267"/>
        <end position="269"/>
    </location>
</feature>
<feature type="strand" evidence="9">
    <location>
        <begin position="270"/>
        <end position="277"/>
    </location>
</feature>
<feature type="strand" evidence="9">
    <location>
        <begin position="280"/>
        <end position="282"/>
    </location>
</feature>
<feature type="helix" evidence="9">
    <location>
        <begin position="286"/>
        <end position="301"/>
    </location>
</feature>
<feature type="strand" evidence="9">
    <location>
        <begin position="304"/>
        <end position="313"/>
    </location>
</feature>
<feature type="helix" evidence="9">
    <location>
        <begin position="314"/>
        <end position="316"/>
    </location>
</feature>
<feature type="strand" evidence="9">
    <location>
        <begin position="318"/>
        <end position="320"/>
    </location>
</feature>
<feature type="helix" evidence="9">
    <location>
        <begin position="325"/>
        <end position="331"/>
    </location>
</feature>